<organism>
    <name type="scientific">Aeropyrum pernix (strain ATCC 700893 / DSM 11879 / JCM 9820 / NBRC 100138 / K1)</name>
    <dbReference type="NCBI Taxonomy" id="272557"/>
    <lineage>
        <taxon>Archaea</taxon>
        <taxon>Thermoproteota</taxon>
        <taxon>Thermoprotei</taxon>
        <taxon>Desulfurococcales</taxon>
        <taxon>Desulfurococcaceae</taxon>
        <taxon>Aeropyrum</taxon>
    </lineage>
</organism>
<reference key="1">
    <citation type="journal article" date="1999" name="DNA Res.">
        <title>Complete genome sequence of an aerobic hyper-thermophilic crenarchaeon, Aeropyrum pernix K1.</title>
        <authorList>
            <person name="Kawarabayasi Y."/>
            <person name="Hino Y."/>
            <person name="Horikawa H."/>
            <person name="Yamazaki S."/>
            <person name="Haikawa Y."/>
            <person name="Jin-no K."/>
            <person name="Takahashi M."/>
            <person name="Sekine M."/>
            <person name="Baba S."/>
            <person name="Ankai A."/>
            <person name="Kosugi H."/>
            <person name="Hosoyama A."/>
            <person name="Fukui S."/>
            <person name="Nagai Y."/>
            <person name="Nishijima K."/>
            <person name="Nakazawa H."/>
            <person name="Takamiya M."/>
            <person name="Masuda S."/>
            <person name="Funahashi T."/>
            <person name="Tanaka T."/>
            <person name="Kudoh Y."/>
            <person name="Yamazaki J."/>
            <person name="Kushida N."/>
            <person name="Oguchi A."/>
            <person name="Aoki K."/>
            <person name="Kubota K."/>
            <person name="Nakamura Y."/>
            <person name="Nomura N."/>
            <person name="Sako Y."/>
            <person name="Kikuchi H."/>
        </authorList>
    </citation>
    <scope>NUCLEOTIDE SEQUENCE [LARGE SCALE GENOMIC DNA]</scope>
    <source>
        <strain>ATCC 700893 / DSM 11879 / JCM 9820 / NBRC 100138 / K1</strain>
    </source>
</reference>
<protein>
    <recommendedName>
        <fullName evidence="1">tRNA (guanine(26)-N(2))-dimethyltransferase</fullName>
        <ecNumber evidence="1">2.1.1.216</ecNumber>
    </recommendedName>
    <alternativeName>
        <fullName evidence="1">tRNA 2,2-dimethylguanosine-26 methyltransferase</fullName>
    </alternativeName>
    <alternativeName>
        <fullName evidence="1">tRNA(guanine-26,N(2)-N(2)) methyltransferase</fullName>
    </alternativeName>
    <alternativeName>
        <fullName evidence="1">tRNA(m(2,2)G26)dimethyltransferase</fullName>
    </alternativeName>
</protein>
<comment type="function">
    <text evidence="1">Dimethylates a single guanine residue at position 26 of a number of tRNAs using S-adenosyl-L-methionine as donor of the methyl groups.</text>
</comment>
<comment type="catalytic activity">
    <reaction evidence="1">
        <text>guanosine(26) in tRNA + 2 S-adenosyl-L-methionine = N(2)-dimethylguanosine(26) in tRNA + 2 S-adenosyl-L-homocysteine + 2 H(+)</text>
        <dbReference type="Rhea" id="RHEA:43140"/>
        <dbReference type="Rhea" id="RHEA-COMP:10359"/>
        <dbReference type="Rhea" id="RHEA-COMP:10360"/>
        <dbReference type="ChEBI" id="CHEBI:15378"/>
        <dbReference type="ChEBI" id="CHEBI:57856"/>
        <dbReference type="ChEBI" id="CHEBI:59789"/>
        <dbReference type="ChEBI" id="CHEBI:74269"/>
        <dbReference type="ChEBI" id="CHEBI:74513"/>
        <dbReference type="EC" id="2.1.1.216"/>
    </reaction>
</comment>
<comment type="similarity">
    <text evidence="1">Belongs to the class I-like SAM-binding methyltransferase superfamily. Trm1 family.</text>
</comment>
<feature type="chain" id="PRO_0000147679" description="tRNA (guanine(26)-N(2))-dimethyltransferase">
    <location>
        <begin position="1"/>
        <end position="407"/>
    </location>
</feature>
<feature type="domain" description="Trm1 methyltransferase" evidence="1">
    <location>
        <begin position="10"/>
        <end position="400"/>
    </location>
</feature>
<feature type="binding site" evidence="1">
    <location>
        <position position="50"/>
    </location>
    <ligand>
        <name>S-adenosyl-L-methionine</name>
        <dbReference type="ChEBI" id="CHEBI:59789"/>
    </ligand>
</feature>
<feature type="binding site" evidence="1">
    <location>
        <position position="82"/>
    </location>
    <ligand>
        <name>S-adenosyl-L-methionine</name>
        <dbReference type="ChEBI" id="CHEBI:59789"/>
    </ligand>
</feature>
<feature type="binding site" evidence="1">
    <location>
        <position position="99"/>
    </location>
    <ligand>
        <name>S-adenosyl-L-methionine</name>
        <dbReference type="ChEBI" id="CHEBI:59789"/>
    </ligand>
</feature>
<feature type="binding site" evidence="1">
    <location>
        <position position="128"/>
    </location>
    <ligand>
        <name>S-adenosyl-L-methionine</name>
        <dbReference type="ChEBI" id="CHEBI:59789"/>
    </ligand>
</feature>
<accession>Q9YDY7</accession>
<dbReference type="EC" id="2.1.1.216" evidence="1"/>
<dbReference type="EMBL" id="BA000002">
    <property type="protein sequence ID" value="BAA79760.2"/>
    <property type="molecule type" value="Genomic_DNA"/>
</dbReference>
<dbReference type="PIR" id="H72669">
    <property type="entry name" value="H72669"/>
</dbReference>
<dbReference type="SMR" id="Q9YDY7"/>
<dbReference type="STRING" id="272557.APE_0782.1"/>
<dbReference type="EnsemblBacteria" id="BAA79760">
    <property type="protein sequence ID" value="BAA79760"/>
    <property type="gene ID" value="APE_0782.1"/>
</dbReference>
<dbReference type="KEGG" id="ape:APE_0782.1"/>
<dbReference type="eggNOG" id="arCOG01219">
    <property type="taxonomic scope" value="Archaea"/>
</dbReference>
<dbReference type="Proteomes" id="UP000002518">
    <property type="component" value="Chromosome"/>
</dbReference>
<dbReference type="GO" id="GO:0160104">
    <property type="term" value="F:tRNA (guanine(26)-N2)-dimethyltransferase activity"/>
    <property type="evidence" value="ECO:0007669"/>
    <property type="project" value="UniProtKB-UniRule"/>
</dbReference>
<dbReference type="GO" id="GO:0000049">
    <property type="term" value="F:tRNA binding"/>
    <property type="evidence" value="ECO:0007669"/>
    <property type="project" value="UniProtKB-KW"/>
</dbReference>
<dbReference type="GO" id="GO:0002940">
    <property type="term" value="P:tRNA N2-guanine methylation"/>
    <property type="evidence" value="ECO:0007669"/>
    <property type="project" value="TreeGrafter"/>
</dbReference>
<dbReference type="Gene3D" id="3.30.56.70">
    <property type="entry name" value="N2,N2-dimethylguanosine tRNA methyltransferase, C-terminal domain"/>
    <property type="match status" value="1"/>
</dbReference>
<dbReference type="Gene3D" id="3.40.50.150">
    <property type="entry name" value="Vaccinia Virus protein VP39"/>
    <property type="match status" value="1"/>
</dbReference>
<dbReference type="HAMAP" id="MF_00290">
    <property type="entry name" value="tRNA_dimethyltr_TRM1"/>
    <property type="match status" value="1"/>
</dbReference>
<dbReference type="InterPro" id="IPR029063">
    <property type="entry name" value="SAM-dependent_MTases_sf"/>
</dbReference>
<dbReference type="InterPro" id="IPR002905">
    <property type="entry name" value="Trm1"/>
</dbReference>
<dbReference type="InterPro" id="IPR022923">
    <property type="entry name" value="TRM1_arc_bac"/>
</dbReference>
<dbReference type="InterPro" id="IPR042296">
    <property type="entry name" value="tRNA_met_Trm1_C"/>
</dbReference>
<dbReference type="NCBIfam" id="TIGR00308">
    <property type="entry name" value="TRM1"/>
    <property type="match status" value="1"/>
</dbReference>
<dbReference type="PANTHER" id="PTHR10631">
    <property type="entry name" value="N 2 ,N 2 -DIMETHYLGUANOSINE TRNA METHYLTRANSFERASE"/>
    <property type="match status" value="1"/>
</dbReference>
<dbReference type="PANTHER" id="PTHR10631:SF3">
    <property type="entry name" value="TRNA (GUANINE(26)-N(2))-DIMETHYLTRANSFERASE"/>
    <property type="match status" value="1"/>
</dbReference>
<dbReference type="Pfam" id="PF02005">
    <property type="entry name" value="TRM"/>
    <property type="match status" value="1"/>
</dbReference>
<dbReference type="SUPFAM" id="SSF53335">
    <property type="entry name" value="S-adenosyl-L-methionine-dependent methyltransferases"/>
    <property type="match status" value="1"/>
</dbReference>
<dbReference type="PROSITE" id="PS51626">
    <property type="entry name" value="SAM_MT_TRM1"/>
    <property type="match status" value="1"/>
</dbReference>
<sequence length="407" mass="43643">MPVPSPMRLAVTHEGRSIIYIPSPEYAVASGRLEPAWLEVFYNPAMEFNRDVSVVAASALRRTGLLTRSGVAFDAHAGVGVRGVRYAVEAGYVKVIMNDINPKASMLAALNARANGLEPGSYMIFNKESNSLMFHLSRERPTPVSLIDIDPYGSPAPFVDAALALSGKGTVVAMTATDLAVLEGGKARAAVRRYMLRSVSKTPVSKETGLRVLLGYVARVAAAHDKAVKPLLAYYADHYYRVYVAVERGARRSDSMLEENLGRLVYCPETGVALALSYAEDPASACGGSYVVAADPAWIGSLGDQAFLEAMLNIAVEAVWLGTRPRVEKLLNTLHGEAPLSPRSIYVSLTSVASKARVNTPKKSKVVELLRSMGYRAVATHFSGEGVRTDAPWGEVLEAVVKLGSSG</sequence>
<proteinExistence type="inferred from homology"/>
<name>TRM1_AERPE</name>
<evidence type="ECO:0000255" key="1">
    <source>
        <dbReference type="HAMAP-Rule" id="MF_00290"/>
    </source>
</evidence>
<gene>
    <name evidence="1" type="primary">trm1</name>
    <name type="ordered locus">APE_0782.1</name>
</gene>
<keyword id="KW-0489">Methyltransferase</keyword>
<keyword id="KW-1185">Reference proteome</keyword>
<keyword id="KW-0694">RNA-binding</keyword>
<keyword id="KW-0949">S-adenosyl-L-methionine</keyword>
<keyword id="KW-0808">Transferase</keyword>
<keyword id="KW-0819">tRNA processing</keyword>
<keyword id="KW-0820">tRNA-binding</keyword>